<protein>
    <recommendedName>
        <fullName evidence="1">Large ribosomal subunit protein uL3</fullName>
    </recommendedName>
    <alternativeName>
        <fullName evidence="2">50S ribosomal protein L3</fullName>
    </alternativeName>
</protein>
<feature type="chain" id="PRO_1000086448" description="Large ribosomal subunit protein uL3">
    <location>
        <begin position="1"/>
        <end position="218"/>
    </location>
</feature>
<keyword id="KW-0687">Ribonucleoprotein</keyword>
<keyword id="KW-0689">Ribosomal protein</keyword>
<keyword id="KW-0694">RNA-binding</keyword>
<keyword id="KW-0699">rRNA-binding</keyword>
<accession>A4T1U2</accession>
<comment type="function">
    <text evidence="1">One of the primary rRNA binding proteins, it binds directly near the 3'-end of the 23S rRNA, where it nucleates assembly of the 50S subunit.</text>
</comment>
<comment type="subunit">
    <text evidence="1">Part of the 50S ribosomal subunit. Forms a cluster with proteins L14 and L19.</text>
</comment>
<comment type="similarity">
    <text evidence="1">Belongs to the universal ribosomal protein uL3 family.</text>
</comment>
<name>RL3_MYCGI</name>
<gene>
    <name evidence="1" type="primary">rplC</name>
    <name type="ordered locus">Mflv_5049</name>
</gene>
<organism>
    <name type="scientific">Mycolicibacterium gilvum (strain PYR-GCK)</name>
    <name type="common">Mycobacterium gilvum (strain PYR-GCK)</name>
    <dbReference type="NCBI Taxonomy" id="350054"/>
    <lineage>
        <taxon>Bacteria</taxon>
        <taxon>Bacillati</taxon>
        <taxon>Actinomycetota</taxon>
        <taxon>Actinomycetes</taxon>
        <taxon>Mycobacteriales</taxon>
        <taxon>Mycobacteriaceae</taxon>
        <taxon>Mycolicibacterium</taxon>
    </lineage>
</organism>
<sequence length="218" mass="23018">MARKGILGTKLGMTQVFDENNKVVPVTVVKAGPNVVTRIRTTERDGYSAVQLAYGEISPRKVNKPVTGQFAAAGVNPRRHLAELRLADNEDAGALYEVGQELTAEIFADGAYVDVTGTSKGKGFAGTMKRHGFKGQGASHGAQAVHRRPGSIGGCATPGRVFKGTRMSGRMGSDRVTTQNLKVHKVDAENGVLLIKGAIPGRNGGLVVVRSAIKRGEK</sequence>
<evidence type="ECO:0000255" key="1">
    <source>
        <dbReference type="HAMAP-Rule" id="MF_01325"/>
    </source>
</evidence>
<evidence type="ECO:0000305" key="2"/>
<proteinExistence type="inferred from homology"/>
<reference key="1">
    <citation type="submission" date="2007-04" db="EMBL/GenBank/DDBJ databases">
        <title>Complete sequence of chromosome of Mycobacterium gilvum PYR-GCK.</title>
        <authorList>
            <consortium name="US DOE Joint Genome Institute"/>
            <person name="Copeland A."/>
            <person name="Lucas S."/>
            <person name="Lapidus A."/>
            <person name="Barry K."/>
            <person name="Detter J.C."/>
            <person name="Glavina del Rio T."/>
            <person name="Hammon N."/>
            <person name="Israni S."/>
            <person name="Dalin E."/>
            <person name="Tice H."/>
            <person name="Pitluck S."/>
            <person name="Chain P."/>
            <person name="Malfatti S."/>
            <person name="Shin M."/>
            <person name="Vergez L."/>
            <person name="Schmutz J."/>
            <person name="Larimer F."/>
            <person name="Land M."/>
            <person name="Hauser L."/>
            <person name="Kyrpides N."/>
            <person name="Mikhailova N."/>
            <person name="Miller C."/>
            <person name="Richardson P."/>
        </authorList>
    </citation>
    <scope>NUCLEOTIDE SEQUENCE [LARGE SCALE GENOMIC DNA]</scope>
    <source>
        <strain>PYR-GCK</strain>
    </source>
</reference>
<dbReference type="EMBL" id="CP000656">
    <property type="protein sequence ID" value="ABP47515.1"/>
    <property type="molecule type" value="Genomic_DNA"/>
</dbReference>
<dbReference type="SMR" id="A4T1U2"/>
<dbReference type="STRING" id="350054.Mflv_5049"/>
<dbReference type="KEGG" id="mgi:Mflv_5049"/>
<dbReference type="eggNOG" id="COG0087">
    <property type="taxonomic scope" value="Bacteria"/>
</dbReference>
<dbReference type="HOGENOM" id="CLU_044142_4_1_11"/>
<dbReference type="OrthoDB" id="9806135at2"/>
<dbReference type="GO" id="GO:0022625">
    <property type="term" value="C:cytosolic large ribosomal subunit"/>
    <property type="evidence" value="ECO:0007669"/>
    <property type="project" value="TreeGrafter"/>
</dbReference>
<dbReference type="GO" id="GO:0019843">
    <property type="term" value="F:rRNA binding"/>
    <property type="evidence" value="ECO:0007669"/>
    <property type="project" value="UniProtKB-UniRule"/>
</dbReference>
<dbReference type="GO" id="GO:0003735">
    <property type="term" value="F:structural constituent of ribosome"/>
    <property type="evidence" value="ECO:0007669"/>
    <property type="project" value="InterPro"/>
</dbReference>
<dbReference type="GO" id="GO:0006412">
    <property type="term" value="P:translation"/>
    <property type="evidence" value="ECO:0007669"/>
    <property type="project" value="UniProtKB-UniRule"/>
</dbReference>
<dbReference type="FunFam" id="2.40.30.10:FF:000004">
    <property type="entry name" value="50S ribosomal protein L3"/>
    <property type="match status" value="1"/>
</dbReference>
<dbReference type="FunFam" id="3.30.160.810:FF:000001">
    <property type="entry name" value="50S ribosomal protein L3"/>
    <property type="match status" value="1"/>
</dbReference>
<dbReference type="Gene3D" id="3.30.160.810">
    <property type="match status" value="1"/>
</dbReference>
<dbReference type="Gene3D" id="2.40.30.10">
    <property type="entry name" value="Translation factors"/>
    <property type="match status" value="1"/>
</dbReference>
<dbReference type="HAMAP" id="MF_01325_B">
    <property type="entry name" value="Ribosomal_uL3_B"/>
    <property type="match status" value="1"/>
</dbReference>
<dbReference type="InterPro" id="IPR000597">
    <property type="entry name" value="Ribosomal_uL3"/>
</dbReference>
<dbReference type="InterPro" id="IPR019927">
    <property type="entry name" value="Ribosomal_uL3_bac/org-type"/>
</dbReference>
<dbReference type="InterPro" id="IPR019926">
    <property type="entry name" value="Ribosomal_uL3_CS"/>
</dbReference>
<dbReference type="InterPro" id="IPR009000">
    <property type="entry name" value="Transl_B-barrel_sf"/>
</dbReference>
<dbReference type="NCBIfam" id="TIGR03625">
    <property type="entry name" value="L3_bact"/>
    <property type="match status" value="1"/>
</dbReference>
<dbReference type="PANTHER" id="PTHR11229">
    <property type="entry name" value="50S RIBOSOMAL PROTEIN L3"/>
    <property type="match status" value="1"/>
</dbReference>
<dbReference type="PANTHER" id="PTHR11229:SF16">
    <property type="entry name" value="LARGE RIBOSOMAL SUBUNIT PROTEIN UL3C"/>
    <property type="match status" value="1"/>
</dbReference>
<dbReference type="Pfam" id="PF00297">
    <property type="entry name" value="Ribosomal_L3"/>
    <property type="match status" value="1"/>
</dbReference>
<dbReference type="SUPFAM" id="SSF50447">
    <property type="entry name" value="Translation proteins"/>
    <property type="match status" value="1"/>
</dbReference>
<dbReference type="PROSITE" id="PS00474">
    <property type="entry name" value="RIBOSOMAL_L3"/>
    <property type="match status" value="1"/>
</dbReference>